<protein>
    <recommendedName>
        <fullName>Aconitate hydratase, mitochondrial</fullName>
        <shortName>Aconitase</shortName>
        <ecNumber evidence="8">4.2.1.3</ecNumber>
    </recommendedName>
    <alternativeName>
        <fullName>Citrate hydro-lyase</fullName>
    </alternativeName>
</protein>
<evidence type="ECO:0000250" key="1">
    <source>
        <dbReference type="UniProtKB" id="P20004"/>
    </source>
</evidence>
<evidence type="ECO:0000269" key="2">
    <source>
    </source>
</evidence>
<evidence type="ECO:0000269" key="3">
    <source>
    </source>
</evidence>
<evidence type="ECO:0000269" key="4">
    <source>
    </source>
</evidence>
<evidence type="ECO:0000269" key="5">
    <source>
    </source>
</evidence>
<evidence type="ECO:0000269" key="6">
    <source>
    </source>
</evidence>
<evidence type="ECO:0000269" key="7">
    <source>
    </source>
</evidence>
<evidence type="ECO:0000269" key="8">
    <source>
    </source>
</evidence>
<evidence type="ECO:0000269" key="9">
    <source>
    </source>
</evidence>
<evidence type="ECO:0000269" key="10">
    <source>
    </source>
</evidence>
<evidence type="ECO:0000269" key="11">
    <source>
    </source>
</evidence>
<evidence type="ECO:0000305" key="12"/>
<evidence type="ECO:0000312" key="13">
    <source>
        <dbReference type="Proteomes" id="UP000002311"/>
    </source>
</evidence>
<evidence type="ECO:0000312" key="14">
    <source>
        <dbReference type="SGD" id="S000004295"/>
    </source>
</evidence>
<evidence type="ECO:0007744" key="15">
    <source>
    </source>
</evidence>
<evidence type="ECO:0007744" key="16">
    <source>
    </source>
</evidence>
<evidence type="ECO:0007744" key="17">
    <source>
    </source>
</evidence>
<name>ACON_YEAST</name>
<reference key="1">
    <citation type="journal article" date="1990" name="Mol. Cell. Biol.">
        <title>Molecular cloning of the yeast mitochondrial aconitase gene (ACO1) and evidence of a synergistic regulation of expression by glucose plus glutamate.</title>
        <authorList>
            <person name="Gangloff S.P."/>
            <person name="Marguet D."/>
            <person name="Lauquin G.J.-M."/>
        </authorList>
    </citation>
    <scope>NUCLEOTIDE SEQUENCE [GENOMIC DNA]</scope>
    <scope>FUNCTION</scope>
    <scope>DISRUPTION PHENOTYPE</scope>
    <scope>CATALYTIC ACTIVITY</scope>
    <source>
        <strain>ATCC 44774 / DBY747</strain>
    </source>
</reference>
<reference key="2">
    <citation type="journal article" date="1997" name="Nature">
        <title>The nucleotide sequence of Saccharomyces cerevisiae chromosome XII.</title>
        <authorList>
            <person name="Johnston M."/>
            <person name="Hillier L.W."/>
            <person name="Riles L."/>
            <person name="Albermann K."/>
            <person name="Andre B."/>
            <person name="Ansorge W."/>
            <person name="Benes V."/>
            <person name="Brueckner M."/>
            <person name="Delius H."/>
            <person name="Dubois E."/>
            <person name="Duesterhoeft A."/>
            <person name="Entian K.-D."/>
            <person name="Floeth M."/>
            <person name="Goffeau A."/>
            <person name="Hebling U."/>
            <person name="Heumann K."/>
            <person name="Heuss-Neitzel D."/>
            <person name="Hilbert H."/>
            <person name="Hilger F."/>
            <person name="Kleine K."/>
            <person name="Koetter P."/>
            <person name="Louis E.J."/>
            <person name="Messenguy F."/>
            <person name="Mewes H.-W."/>
            <person name="Miosga T."/>
            <person name="Moestl D."/>
            <person name="Mueller-Auer S."/>
            <person name="Nentwich U."/>
            <person name="Obermaier B."/>
            <person name="Piravandi E."/>
            <person name="Pohl T.M."/>
            <person name="Portetelle D."/>
            <person name="Purnelle B."/>
            <person name="Rechmann S."/>
            <person name="Rieger M."/>
            <person name="Rinke M."/>
            <person name="Rose M."/>
            <person name="Scharfe M."/>
            <person name="Scherens B."/>
            <person name="Scholler P."/>
            <person name="Schwager C."/>
            <person name="Schwarz S."/>
            <person name="Underwood A.P."/>
            <person name="Urrestarazu L.A."/>
            <person name="Vandenbol M."/>
            <person name="Verhasselt P."/>
            <person name="Vierendeels F."/>
            <person name="Voet M."/>
            <person name="Volckaert G."/>
            <person name="Voss H."/>
            <person name="Wambutt R."/>
            <person name="Wedler E."/>
            <person name="Wedler H."/>
            <person name="Zimmermann F.K."/>
            <person name="Zollner A."/>
            <person name="Hani J."/>
            <person name="Hoheisel J.D."/>
        </authorList>
    </citation>
    <scope>NUCLEOTIDE SEQUENCE [LARGE SCALE GENOMIC DNA]</scope>
    <source>
        <strain>ATCC 204508 / S288c</strain>
    </source>
</reference>
<reference key="3">
    <citation type="journal article" date="2014" name="G3 (Bethesda)">
        <title>The reference genome sequence of Saccharomyces cerevisiae: Then and now.</title>
        <authorList>
            <person name="Engel S.R."/>
            <person name="Dietrich F.S."/>
            <person name="Fisk D.G."/>
            <person name="Binkley G."/>
            <person name="Balakrishnan R."/>
            <person name="Costanzo M.C."/>
            <person name="Dwight S.S."/>
            <person name="Hitz B.C."/>
            <person name="Karra K."/>
            <person name="Nash R.S."/>
            <person name="Weng S."/>
            <person name="Wong E.D."/>
            <person name="Lloyd P."/>
            <person name="Skrzypek M.S."/>
            <person name="Miyasato S.R."/>
            <person name="Simison M."/>
            <person name="Cherry J.M."/>
        </authorList>
    </citation>
    <scope>GENOME REANNOTATION</scope>
    <source>
        <strain>ATCC 204508 / S288c</strain>
    </source>
</reference>
<reference key="4">
    <citation type="journal article" date="2005" name="Mol. Biol. Cell">
        <title>Yeast aconitase in two locations and two metabolic pathways: seeing small amounts is believing.</title>
        <authorList>
            <person name="Regev-Rudzki N."/>
            <person name="Karniely S."/>
            <person name="Ben-Haim N.N."/>
            <person name="Pines O."/>
        </authorList>
    </citation>
    <scope>PROTEIN SEQUENCE OF 17-23</scope>
    <scope>SUBCELLULAR LOCATION</scope>
</reference>
<reference key="5">
    <citation type="journal article" date="1999" name="Genetics">
        <title>Genetic and biochemical interactions involving tricarboxylic acid cycle (TCA) function using a collection of mutants defective in all TCA cycle genes.</title>
        <authorList>
            <person name="Przybyla-Zawislak B."/>
            <person name="Gadde D.M."/>
            <person name="Ducharme K."/>
            <person name="McCammon M.T."/>
        </authorList>
    </citation>
    <scope>DISRUPTION PHENOTYPE</scope>
</reference>
<reference key="6">
    <citation type="journal article" date="2003" name="Nature">
        <title>Global analysis of protein expression in yeast.</title>
        <authorList>
            <person name="Ghaemmaghami S."/>
            <person name="Huh W.-K."/>
            <person name="Bower K."/>
            <person name="Howson R.W."/>
            <person name="Belle A."/>
            <person name="Dephoure N."/>
            <person name="O'Shea E.K."/>
            <person name="Weissman J.S."/>
        </authorList>
    </citation>
    <scope>LEVEL OF PROTEIN EXPRESSION [LARGE SCALE ANALYSIS]</scope>
</reference>
<reference key="7">
    <citation type="journal article" date="2005" name="Science">
        <title>Aconitase couples metabolic regulation to mitochondrial DNA maintenance.</title>
        <authorList>
            <person name="Chen X.J."/>
            <person name="Wang X."/>
            <person name="Kaufman B.A."/>
            <person name="Butow R.A."/>
        </authorList>
    </citation>
    <scope>FUNCTION</scope>
    <scope>SUBUNIT</scope>
</reference>
<reference key="8">
    <citation type="journal article" date="2007" name="J. Proteome Res.">
        <title>Large-scale phosphorylation analysis of alpha-factor-arrested Saccharomyces cerevisiae.</title>
        <authorList>
            <person name="Li X."/>
            <person name="Gerber S.A."/>
            <person name="Rudner A.D."/>
            <person name="Beausoleil S.A."/>
            <person name="Haas W."/>
            <person name="Villen J."/>
            <person name="Elias J.E."/>
            <person name="Gygi S.P."/>
        </authorList>
    </citation>
    <scope>PHOSPHORYLATION [LARGE SCALE ANALYSIS] AT SER-556</scope>
    <scope>IDENTIFICATION BY MASS SPECTROMETRY [LARGE SCALE ANALYSIS]</scope>
    <source>
        <strain>ADR376</strain>
    </source>
</reference>
<reference key="9">
    <citation type="journal article" date="2007" name="Mol. Cell. Proteomics">
        <title>Profiling phosphoproteins of yeast mitochondria reveals a role of phosphorylation in assembly of the ATP synthase.</title>
        <authorList>
            <person name="Reinders J."/>
            <person name="Wagner K."/>
            <person name="Zahedi R.P."/>
            <person name="Stojanovski D."/>
            <person name="Eyrich B."/>
            <person name="van der Laan M."/>
            <person name="Rehling P."/>
            <person name="Sickmann A."/>
            <person name="Pfanner N."/>
            <person name="Meisinger C."/>
        </authorList>
    </citation>
    <scope>PHOSPHORYLATION [LARGE SCALE ANALYSIS] AT THR-409</scope>
    <scope>IDENTIFICATION BY MASS SPECTROMETRY [LARGE SCALE ANALYSIS]</scope>
    <source>
        <strain>ATCC 76625 / YPH499</strain>
    </source>
</reference>
<reference key="10">
    <citation type="journal article" date="2007" name="Proc. Natl. Acad. Sci. U.S.A.">
        <title>Yeast aconitase binds and provides metabolically coupled protection to mitochondrial DNA.</title>
        <authorList>
            <person name="Chen X.J."/>
            <person name="Wang X."/>
            <person name="Butow R.A."/>
        </authorList>
    </citation>
    <scope>FUNCTION</scope>
    <scope>SUBUNIT</scope>
</reference>
<reference key="11">
    <citation type="journal article" date="2008" name="Arch. Biochem. Biophys.">
        <title>Suppression of metabolic defects of yeast isocitrate dehydrogenase and aconitase mutants by loss of citrate synthase.</title>
        <authorList>
            <person name="Lin A.P."/>
            <person name="Hakala K.W."/>
            <person name="Weintraub S.T."/>
            <person name="McAlister-Henn L."/>
        </authorList>
    </citation>
    <scope>DISRUPTION PHENOTYPE</scope>
</reference>
<reference key="12">
    <citation type="journal article" date="2008" name="J. Cell Sci.">
        <title>The mitochondrial targeting sequence tilts the balance between mitochondrial and cytosolic dual localization.</title>
        <authorList>
            <person name="Regev-Rudzki N."/>
            <person name="Yogev O."/>
            <person name="Pines O."/>
        </authorList>
    </citation>
    <scope>SUBCELLULAR LOCATION</scope>
</reference>
<reference key="13">
    <citation type="journal article" date="2009" name="Science">
        <title>Global analysis of Cdk1 substrate phosphorylation sites provides insights into evolution.</title>
        <authorList>
            <person name="Holt L.J."/>
            <person name="Tuch B.B."/>
            <person name="Villen J."/>
            <person name="Johnson A.D."/>
            <person name="Gygi S.P."/>
            <person name="Morgan D.O."/>
        </authorList>
    </citation>
    <scope>PHOSPHORYLATION [LARGE SCALE ANALYSIS] AT SER-391</scope>
    <scope>IDENTIFICATION BY MASS SPECTROMETRY [LARGE SCALE ANALYSIS]</scope>
</reference>
<reference key="14">
    <citation type="journal article" date="2011" name="J. Mol. Biol.">
        <title>The aconitase C-terminal domain is an independent dual targeting element.</title>
        <authorList>
            <person name="Ben-Menachem R."/>
            <person name="Regev-Rudzki N."/>
            <person name="Pines O."/>
        </authorList>
    </citation>
    <scope>SUBCELLULAR LOCATION</scope>
</reference>
<reference key="15">
    <citation type="journal article" date="2012" name="Mol. Microbiol.">
        <title>The fungal alpha-aminoadipate pathway for lysine biosynthesis requires two enzymes of the aconitase family for the isomerization of homocitrate to homoisocitrate.</title>
        <authorList>
            <person name="Fazius F."/>
            <person name="Shelest E."/>
            <person name="Gebhardt P."/>
            <person name="Brock M."/>
        </authorList>
    </citation>
    <scope>FUNCTION</scope>
    <scope>INDUCTION</scope>
    <scope>MUTAGENESIS OF ARG-604</scope>
</reference>
<reference key="16">
    <citation type="journal article" date="2013" name="Oxid. Med. Cell. Longev.">
        <title>Mitochondrial DNA instability in cells lacking aconitase correlates with iron citrate toxicity.</title>
        <authorList>
            <person name="Farooq M.A."/>
            <person name="Pracheil T.M."/>
            <person name="Dong Z."/>
            <person name="Xiao F."/>
            <person name="Liu Z."/>
        </authorList>
    </citation>
    <scope>FUNCTION</scope>
</reference>
<reference key="17">
    <citation type="journal article" date="2017" name="Metallomics">
        <title>In vitro characterization of a novel Isu homologue from Drosophila melanogaster for de novo FeS-cluster formation.</title>
        <authorList>
            <person name="Dzul S.P."/>
            <person name="Rocha A.G."/>
            <person name="Rawat S."/>
            <person name="Kandegedara A."/>
            <person name="Kusowski A."/>
            <person name="Pain J."/>
            <person name="Murari A."/>
            <person name="Pain D."/>
            <person name="Dancis A."/>
            <person name="Stemmler T.L."/>
        </authorList>
    </citation>
    <scope>COFACTOR</scope>
</reference>
<comment type="function">
    <text evidence="4 6 8 9 10">Catalyzes the isomerization of citrate to isocitrate via cis-aconitate, a step in the citric acid cycle. Can also provide minor contributions to the reversible dehydration of (R)-homocitrate to cis-homoaconitate, a step in the alpha-aminoadipate pathway for lysine biosynthesis. Also plays an essential role in mtDNA maintenance. May directly protect mtDNA from accumulation of point mutations and ssDNA breaks as a component of mitochondrial nucleoids, or by preventing accumulation of iron citrate thereby alleviating its detrimental effects in mitochondria.</text>
</comment>
<comment type="catalytic activity">
    <reaction evidence="8">
        <text>citrate = D-threo-isocitrate</text>
        <dbReference type="Rhea" id="RHEA:10336"/>
        <dbReference type="ChEBI" id="CHEBI:15562"/>
        <dbReference type="ChEBI" id="CHEBI:16947"/>
        <dbReference type="EC" id="4.2.1.3"/>
    </reaction>
</comment>
<comment type="cofactor">
    <cofactor evidence="11">
        <name>[4Fe-4S] cluster</name>
        <dbReference type="ChEBI" id="CHEBI:49883"/>
    </cofactor>
    <text evidence="1">Binds 1 [4Fe-4S] cluster per subunit.</text>
</comment>
<comment type="activity regulation">
    <text>Subject to catabolite regulation.</text>
</comment>
<comment type="pathway">
    <text evidence="8">Carbohydrate metabolism; tricarboxylic acid cycle; isocitrate from oxaloacetate: step 2/2.</text>
</comment>
<comment type="subunit">
    <text evidence="4 6">Monomer. Binds to mitochondrial DNA (mtDNA) and identified as component of mitochondrial nucleoids.</text>
</comment>
<comment type="subcellular location">
    <subcellularLocation>
        <location>Mitochondrion</location>
    </subcellularLocation>
    <subcellularLocation>
        <location>Cytoplasm</location>
    </subcellularLocation>
    <text>Mainly mitochondrial, small amounts are also detected in the cytosol with a ratio of 94:6.</text>
</comment>
<comment type="induction">
    <text evidence="9">Highly induced in the absence of glutamate. Induction is further increased when both glutamate and lysine are missing.</text>
</comment>
<comment type="disruption phenotype">
    <text evidence="2 7 8">Essential for growth on nonfermentable carbon sources and for biosynthesis of glutamate. Causes a dramatic increase in cellular citrate levels.</text>
</comment>
<comment type="miscellaneous">
    <text>The fermenting yeast S.cerevisiae has 2 aconitases, ACO1 essential for the citric acid cycle, and ACO2 specifically and exclusively contributing to lysine biosynthesis. In contrast, in respiring filamentous fungi the ACO2 homologs (acoB) seem enzymatically inactive and the ACO1 homolog (acoA) is solely responsible for these functions.</text>
</comment>
<comment type="miscellaneous">
    <text evidence="3">Present with 96700 molecules/cell in log phase SD medium.</text>
</comment>
<comment type="similarity">
    <text evidence="12">Belongs to the aconitase/IPM isomerase family.</text>
</comment>
<sequence>MLSARSAIKRPIVRGLATVSNLTRDSKVNQNLLEDHSFINYKQNVETLDIVRKRLNRPFTYAEKILYGHLDDPHGQDIQRGVSYLKLRPDRVACQDATAQMAILQFMSAGLPQVAKPVTVHCDHLIQAQVGGEKDLKRAIDLNKEVYDFLASATAKYNMGFWKPGSGIIHQIVLENYAFPGALIIGTDSHTPNAGGLGQLAIGVGGADAVDVMAGRPWELKAPKILGVKLTGKMNGWTSPKDIILKLAGITTVKGGTGKIVEYFGDGVDTFSATGMGTICNMGAEIGATTSVFPFNKSMIEYLEATGRGKIADFAKLYHKDLLSADKDAEYDEVVEIDLNTLEPYINGPFTPDLATPVSKMKEVAVANNWPLDVRVGLIGSCTNSSYEDMSRSASIVKDAAAHGLKSKTIFTVTPGSEQIRATIERDGQLETFKEFGGIVLANACGPCIGQWDRRDIKKGDKNTIVSSYNRNFTSRNDGNPQTHAFVASPELVTAFAIAGDLRFNPLTDKLKDKDGNEFMLKPPHGDGLPQRGYDAGENTYQAPPADRSTVEVKVSPTSDRLQLLKPFKPWDGKDAKDMPILIKAVGKTTTDHISMAGPWLKYRGHLENISNNYMIGAINAENKKANCVKNVYTGEYKGVPDTARDYRDQGIKWVVIGDENFGEGSSREHAALEPRFLGGFAIITKSFARIHETNLKKQGLLPLNFKNPADYDKINPDDRIDILGLAELAPGKPVTMRVHPKNGKPWDAVLTHTFNDEQIEWFKYGSALNKIKADEKK</sequence>
<feature type="transit peptide" description="Mitochondrion" evidence="5">
    <location>
        <begin position="1"/>
        <end position="16"/>
    </location>
</feature>
<feature type="chain" id="PRO_0000000547" description="Aconitate hydratase, mitochondrial">
    <location>
        <begin position="17"/>
        <end position="778"/>
    </location>
</feature>
<feature type="binding site" evidence="1">
    <location>
        <position position="95"/>
    </location>
    <ligand>
        <name>substrate</name>
    </ligand>
</feature>
<feature type="binding site" evidence="1">
    <location>
        <begin position="188"/>
        <end position="190"/>
    </location>
    <ligand>
        <name>substrate</name>
    </ligand>
</feature>
<feature type="binding site" evidence="1">
    <location>
        <position position="382"/>
    </location>
    <ligand>
        <name>[4Fe-4S] cluster</name>
        <dbReference type="ChEBI" id="CHEBI:49883"/>
    </ligand>
</feature>
<feature type="binding site" evidence="1">
    <location>
        <position position="445"/>
    </location>
    <ligand>
        <name>[4Fe-4S] cluster</name>
        <dbReference type="ChEBI" id="CHEBI:49883"/>
    </ligand>
</feature>
<feature type="binding site" evidence="1">
    <location>
        <position position="448"/>
    </location>
    <ligand>
        <name>[4Fe-4S] cluster</name>
        <dbReference type="ChEBI" id="CHEBI:49883"/>
    </ligand>
</feature>
<feature type="binding site" evidence="1">
    <location>
        <position position="471"/>
    </location>
    <ligand>
        <name>substrate</name>
    </ligand>
</feature>
<feature type="binding site" evidence="1">
    <location>
        <position position="476"/>
    </location>
    <ligand>
        <name>substrate</name>
    </ligand>
</feature>
<feature type="binding site" evidence="1">
    <location>
        <position position="604"/>
    </location>
    <ligand>
        <name>substrate</name>
    </ligand>
</feature>
<feature type="binding site" evidence="1">
    <location>
        <begin position="667"/>
        <end position="668"/>
    </location>
    <ligand>
        <name>substrate</name>
    </ligand>
</feature>
<feature type="modified residue" description="Phosphoserine" evidence="17">
    <location>
        <position position="391"/>
    </location>
</feature>
<feature type="modified residue" description="Phosphothreonine" evidence="16">
    <location>
        <position position="409"/>
    </location>
</feature>
<feature type="modified residue" description="Phosphoserine" evidence="15">
    <location>
        <position position="556"/>
    </location>
</feature>
<feature type="mutagenesis site" description="Strongly diminishes the catalytic activity towards both known substrates, aconitate and homoaconitate." evidence="9">
    <original>R</original>
    <variation>K</variation>
    <location>
        <position position="604"/>
    </location>
</feature>
<feature type="sequence conflict" description="In Ref. 1; AAA34389." evidence="12" ref="1">
    <original>DGLPQRGYDAGENTYQAPPADRS</original>
    <variation>RWFASKEVMMLVRTLTKLHLQTVA</variation>
    <location>
        <begin position="527"/>
        <end position="549"/>
    </location>
</feature>
<dbReference type="EC" id="4.2.1.3" evidence="8"/>
<dbReference type="EMBL" id="M33131">
    <property type="protein sequence ID" value="AAA34389.1"/>
    <property type="molecule type" value="Genomic_DNA"/>
</dbReference>
<dbReference type="EMBL" id="U17243">
    <property type="protein sequence ID" value="AAB67348.1"/>
    <property type="molecule type" value="Genomic_DNA"/>
</dbReference>
<dbReference type="EMBL" id="BK006945">
    <property type="protein sequence ID" value="DAA09613.1"/>
    <property type="molecule type" value="Genomic_DNA"/>
</dbReference>
<dbReference type="PIR" id="S50387">
    <property type="entry name" value="S50387"/>
</dbReference>
<dbReference type="RefSeq" id="NP_013407.1">
    <property type="nucleotide sequence ID" value="NM_001182192.1"/>
</dbReference>
<dbReference type="SMR" id="P19414"/>
<dbReference type="BioGRID" id="31569">
    <property type="interactions" value="270"/>
</dbReference>
<dbReference type="DIP" id="DIP-4679N"/>
<dbReference type="FunCoup" id="P19414">
    <property type="interactions" value="1190"/>
</dbReference>
<dbReference type="IntAct" id="P19414">
    <property type="interactions" value="46"/>
</dbReference>
<dbReference type="MINT" id="P19414"/>
<dbReference type="STRING" id="4932.YLR304C"/>
<dbReference type="MoonDB" id="P19414">
    <property type="type" value="Curated"/>
</dbReference>
<dbReference type="GlyGen" id="P19414">
    <property type="glycosylation" value="1 site"/>
</dbReference>
<dbReference type="iPTMnet" id="P19414"/>
<dbReference type="PaxDb" id="4932-YLR304C"/>
<dbReference type="PeptideAtlas" id="P19414"/>
<dbReference type="TopDownProteomics" id="P19414"/>
<dbReference type="EnsemblFungi" id="YLR304C_mRNA">
    <property type="protein sequence ID" value="YLR304C"/>
    <property type="gene ID" value="YLR304C"/>
</dbReference>
<dbReference type="GeneID" id="851013"/>
<dbReference type="KEGG" id="sce:YLR304C"/>
<dbReference type="AGR" id="SGD:S000004295"/>
<dbReference type="SGD" id="S000004295">
    <property type="gene designation" value="ACO1"/>
</dbReference>
<dbReference type="VEuPathDB" id="FungiDB:YLR304C"/>
<dbReference type="eggNOG" id="KOG0453">
    <property type="taxonomic scope" value="Eukaryota"/>
</dbReference>
<dbReference type="GeneTree" id="ENSGT00940000154892"/>
<dbReference type="HOGENOM" id="CLU_006714_2_2_1"/>
<dbReference type="InParanoid" id="P19414"/>
<dbReference type="OMA" id="KKQGMLG"/>
<dbReference type="OrthoDB" id="2224430at2759"/>
<dbReference type="BioCyc" id="MetaCyc:YLR304C-MONOMER"/>
<dbReference type="BioCyc" id="YEAST:YLR304C-MONOMER"/>
<dbReference type="BRENDA" id="4.2.1.3">
    <property type="organism ID" value="984"/>
</dbReference>
<dbReference type="Reactome" id="R-SCE-71403">
    <property type="pathway name" value="Citric acid cycle (TCA cycle)"/>
</dbReference>
<dbReference type="Reactome" id="R-SCE-9837999">
    <property type="pathway name" value="Mitochondrial protein degradation"/>
</dbReference>
<dbReference type="Reactome" id="R-SCE-9854311">
    <property type="pathway name" value="Maturation of TCA enzymes and regulation of TCA cycle"/>
</dbReference>
<dbReference type="UniPathway" id="UPA00223">
    <property type="reaction ID" value="UER00718"/>
</dbReference>
<dbReference type="BioGRID-ORCS" id="851013">
    <property type="hits" value="1 hit in 10 CRISPR screens"/>
</dbReference>
<dbReference type="PRO" id="PR:P19414"/>
<dbReference type="Proteomes" id="UP000002311">
    <property type="component" value="Chromosome XII"/>
</dbReference>
<dbReference type="RNAct" id="P19414">
    <property type="molecule type" value="protein"/>
</dbReference>
<dbReference type="GO" id="GO:0005829">
    <property type="term" value="C:cytosol"/>
    <property type="evidence" value="ECO:0000314"/>
    <property type="project" value="SGD"/>
</dbReference>
<dbReference type="GO" id="GO:0005758">
    <property type="term" value="C:mitochondrial intermembrane space"/>
    <property type="evidence" value="ECO:0000304"/>
    <property type="project" value="Reactome"/>
</dbReference>
<dbReference type="GO" id="GO:0005759">
    <property type="term" value="C:mitochondrial matrix"/>
    <property type="evidence" value="ECO:0000314"/>
    <property type="project" value="SGD"/>
</dbReference>
<dbReference type="GO" id="GO:0042645">
    <property type="term" value="C:mitochondrial nucleoid"/>
    <property type="evidence" value="ECO:0000314"/>
    <property type="project" value="SGD"/>
</dbReference>
<dbReference type="GO" id="GO:0005739">
    <property type="term" value="C:mitochondrion"/>
    <property type="evidence" value="ECO:0007005"/>
    <property type="project" value="SGD"/>
</dbReference>
<dbReference type="GO" id="GO:0051539">
    <property type="term" value="F:4 iron, 4 sulfur cluster binding"/>
    <property type="evidence" value="ECO:0000318"/>
    <property type="project" value="GO_Central"/>
</dbReference>
<dbReference type="GO" id="GO:0003994">
    <property type="term" value="F:aconitate hydratase activity"/>
    <property type="evidence" value="ECO:0000314"/>
    <property type="project" value="SGD"/>
</dbReference>
<dbReference type="GO" id="GO:0003690">
    <property type="term" value="F:double-stranded DNA binding"/>
    <property type="evidence" value="ECO:0000314"/>
    <property type="project" value="SGD"/>
</dbReference>
<dbReference type="GO" id="GO:0051536">
    <property type="term" value="F:iron-sulfur cluster binding"/>
    <property type="evidence" value="ECO:0000314"/>
    <property type="project" value="UniProtKB"/>
</dbReference>
<dbReference type="GO" id="GO:0046872">
    <property type="term" value="F:metal ion binding"/>
    <property type="evidence" value="ECO:0007669"/>
    <property type="project" value="UniProtKB-KW"/>
</dbReference>
<dbReference type="GO" id="GO:0003729">
    <property type="term" value="F:mRNA binding"/>
    <property type="evidence" value="ECO:0000314"/>
    <property type="project" value="SGD"/>
</dbReference>
<dbReference type="GO" id="GO:0003697">
    <property type="term" value="F:single-stranded DNA binding"/>
    <property type="evidence" value="ECO:0000314"/>
    <property type="project" value="SGD"/>
</dbReference>
<dbReference type="GO" id="GO:0000002">
    <property type="term" value="P:mitochondrial genome maintenance"/>
    <property type="evidence" value="ECO:0000315"/>
    <property type="project" value="SGD"/>
</dbReference>
<dbReference type="GO" id="GO:0006099">
    <property type="term" value="P:tricarboxylic acid cycle"/>
    <property type="evidence" value="ECO:0000314"/>
    <property type="project" value="SGD"/>
</dbReference>
<dbReference type="CDD" id="cd01578">
    <property type="entry name" value="AcnA_Mitochon_Swivel"/>
    <property type="match status" value="1"/>
</dbReference>
<dbReference type="CDD" id="cd01584">
    <property type="entry name" value="AcnA_Mitochondrial"/>
    <property type="match status" value="1"/>
</dbReference>
<dbReference type="FunFam" id="3.20.19.10:FF:000002">
    <property type="entry name" value="Aconitate hydratase, mitochondrial"/>
    <property type="match status" value="1"/>
</dbReference>
<dbReference type="FunFam" id="3.30.499.10:FF:000003">
    <property type="entry name" value="Aconitate hydratase, mitochondrial"/>
    <property type="match status" value="1"/>
</dbReference>
<dbReference type="FunFam" id="3.30.499.10:FF:000004">
    <property type="entry name" value="Aconitate hydratase, mitochondrial"/>
    <property type="match status" value="1"/>
</dbReference>
<dbReference type="FunFam" id="3.40.1060.10:FF:000001">
    <property type="entry name" value="Aconitate hydratase, mitochondrial"/>
    <property type="match status" value="1"/>
</dbReference>
<dbReference type="Gene3D" id="3.40.1060.10">
    <property type="entry name" value="Aconitase, Domain 2"/>
    <property type="match status" value="1"/>
</dbReference>
<dbReference type="Gene3D" id="3.30.499.10">
    <property type="entry name" value="Aconitase, domain 3"/>
    <property type="match status" value="2"/>
</dbReference>
<dbReference type="Gene3D" id="3.20.19.10">
    <property type="entry name" value="Aconitase, domain 4"/>
    <property type="match status" value="1"/>
</dbReference>
<dbReference type="InterPro" id="IPR015931">
    <property type="entry name" value="Acnase/IPM_dHydase_lsu_aba_1/3"/>
</dbReference>
<dbReference type="InterPro" id="IPR001030">
    <property type="entry name" value="Acoase/IPM_deHydtase_lsu_aba"/>
</dbReference>
<dbReference type="InterPro" id="IPR015928">
    <property type="entry name" value="Aconitase/3IPM_dehydase_swvl"/>
</dbReference>
<dbReference type="InterPro" id="IPR050926">
    <property type="entry name" value="Aconitase/IPM_isomerase"/>
</dbReference>
<dbReference type="InterPro" id="IPR018136">
    <property type="entry name" value="Aconitase_4Fe-4S_BS"/>
</dbReference>
<dbReference type="InterPro" id="IPR036008">
    <property type="entry name" value="Aconitase_4Fe-4S_dom"/>
</dbReference>
<dbReference type="InterPro" id="IPR015932">
    <property type="entry name" value="Aconitase_dom2"/>
</dbReference>
<dbReference type="InterPro" id="IPR006248">
    <property type="entry name" value="Aconitase_mito-like"/>
</dbReference>
<dbReference type="InterPro" id="IPR000573">
    <property type="entry name" value="AconitaseA/IPMdHydase_ssu_swvl"/>
</dbReference>
<dbReference type="NCBIfam" id="TIGR01340">
    <property type="entry name" value="aconitase_mito"/>
    <property type="match status" value="1"/>
</dbReference>
<dbReference type="NCBIfam" id="NF005558">
    <property type="entry name" value="PRK07229.1"/>
    <property type="match status" value="1"/>
</dbReference>
<dbReference type="PANTHER" id="PTHR43160">
    <property type="entry name" value="ACONITATE HYDRATASE B"/>
    <property type="match status" value="1"/>
</dbReference>
<dbReference type="PANTHER" id="PTHR43160:SF3">
    <property type="entry name" value="ACONITATE HYDRATASE, MITOCHONDRIAL"/>
    <property type="match status" value="1"/>
</dbReference>
<dbReference type="Pfam" id="PF00330">
    <property type="entry name" value="Aconitase"/>
    <property type="match status" value="1"/>
</dbReference>
<dbReference type="Pfam" id="PF00694">
    <property type="entry name" value="Aconitase_C"/>
    <property type="match status" value="1"/>
</dbReference>
<dbReference type="PRINTS" id="PR00415">
    <property type="entry name" value="ACONITASE"/>
</dbReference>
<dbReference type="SUPFAM" id="SSF53732">
    <property type="entry name" value="Aconitase iron-sulfur domain"/>
    <property type="match status" value="1"/>
</dbReference>
<dbReference type="SUPFAM" id="SSF52016">
    <property type="entry name" value="LeuD/IlvD-like"/>
    <property type="match status" value="1"/>
</dbReference>
<dbReference type="PROSITE" id="PS00450">
    <property type="entry name" value="ACONITASE_1"/>
    <property type="match status" value="1"/>
</dbReference>
<dbReference type="PROSITE" id="PS01244">
    <property type="entry name" value="ACONITASE_2"/>
    <property type="match status" value="1"/>
</dbReference>
<keyword id="KW-0004">4Fe-4S</keyword>
<keyword id="KW-0963">Cytoplasm</keyword>
<keyword id="KW-0903">Direct protein sequencing</keyword>
<keyword id="KW-0408">Iron</keyword>
<keyword id="KW-0411">Iron-sulfur</keyword>
<keyword id="KW-0456">Lyase</keyword>
<keyword id="KW-0479">Metal-binding</keyword>
<keyword id="KW-0496">Mitochondrion</keyword>
<keyword id="KW-0597">Phosphoprotein</keyword>
<keyword id="KW-1185">Reference proteome</keyword>
<keyword id="KW-0809">Transit peptide</keyword>
<keyword id="KW-0816">Tricarboxylic acid cycle</keyword>
<organism evidence="13">
    <name type="scientific">Saccharomyces cerevisiae (strain ATCC 204508 / S288c)</name>
    <name type="common">Baker's yeast</name>
    <dbReference type="NCBI Taxonomy" id="559292"/>
    <lineage>
        <taxon>Eukaryota</taxon>
        <taxon>Fungi</taxon>
        <taxon>Dikarya</taxon>
        <taxon>Ascomycota</taxon>
        <taxon>Saccharomycotina</taxon>
        <taxon>Saccharomycetes</taxon>
        <taxon>Saccharomycetales</taxon>
        <taxon>Saccharomycetaceae</taxon>
        <taxon>Saccharomyces</taxon>
    </lineage>
</organism>
<gene>
    <name evidence="14" type="primary">ACO1</name>
    <name evidence="14" type="synonym">GLU1</name>
    <name evidence="14" type="ordered locus">YLR304C</name>
    <name type="ORF">L8003.22</name>
</gene>
<accession>P19414</accession>
<accession>D6VYU7</accession>
<proteinExistence type="evidence at protein level"/>